<feature type="chain" id="PRO_1000130766" description="Nucleotide-binding protein LAF_0356">
    <location>
        <begin position="1"/>
        <end position="289"/>
    </location>
</feature>
<feature type="binding site" evidence="1">
    <location>
        <begin position="12"/>
        <end position="19"/>
    </location>
    <ligand>
        <name>ATP</name>
        <dbReference type="ChEBI" id="CHEBI:30616"/>
    </ligand>
</feature>
<feature type="binding site" evidence="1">
    <location>
        <begin position="62"/>
        <end position="65"/>
    </location>
    <ligand>
        <name>GTP</name>
        <dbReference type="ChEBI" id="CHEBI:37565"/>
    </ligand>
</feature>
<gene>
    <name type="ordered locus">LAF_0356</name>
</gene>
<reference key="1">
    <citation type="journal article" date="2008" name="DNA Res.">
        <title>Comparative genome analysis of Lactobacillus reuteri and Lactobacillus fermentum reveal a genomic island for reuterin and cobalamin production.</title>
        <authorList>
            <person name="Morita H."/>
            <person name="Toh H."/>
            <person name="Fukuda S."/>
            <person name="Horikawa H."/>
            <person name="Oshima K."/>
            <person name="Suzuki T."/>
            <person name="Murakami M."/>
            <person name="Hisamatsu S."/>
            <person name="Kato Y."/>
            <person name="Takizawa T."/>
            <person name="Fukuoka H."/>
            <person name="Yoshimura T."/>
            <person name="Itoh K."/>
            <person name="O'Sullivan D.J."/>
            <person name="McKay L.L."/>
            <person name="Ohno H."/>
            <person name="Kikuchi J."/>
            <person name="Masaoka T."/>
            <person name="Hattori M."/>
        </authorList>
    </citation>
    <scope>NUCLEOTIDE SEQUENCE [LARGE SCALE GENOMIC DNA]</scope>
    <source>
        <strain>NBRC 3956 / LMG 18251</strain>
    </source>
</reference>
<sequence>MAEQLEVVIITGMSGAGKTVAVQSFEDLGYFVIDNMIPSVATKFVDAVKQSGEITRMAMVMDSRSRGFYDQVVPCVAQLRGRSDLTLRLLFLEATDEELVSRYKESRRAHPLSHQDGVLPGIMRERQLLNDLKSQADLVVDTTTLTPRQLKQRITERFSPDEAHSFYVNVMSFGFKYGLPLDADLVIDVRFLPNPYYIPDLKYQTGNDPAVQAYVMDNPLAQNFYQHLYSLIEVALPGYIKEGKSSLTIAIGCTGGQHRSVTIANRLAADLKNNQYPVHVHHRDVDKAN</sequence>
<proteinExistence type="inferred from homology"/>
<name>Y356_LIMF3</name>
<organism>
    <name type="scientific">Limosilactobacillus fermentum (strain NBRC 3956 / LMG 18251)</name>
    <name type="common">Lactobacillus fermentum</name>
    <dbReference type="NCBI Taxonomy" id="334390"/>
    <lineage>
        <taxon>Bacteria</taxon>
        <taxon>Bacillati</taxon>
        <taxon>Bacillota</taxon>
        <taxon>Bacilli</taxon>
        <taxon>Lactobacillales</taxon>
        <taxon>Lactobacillaceae</taxon>
        <taxon>Limosilactobacillus</taxon>
    </lineage>
</organism>
<comment type="function">
    <text evidence="1">Displays ATPase and GTPase activities.</text>
</comment>
<comment type="similarity">
    <text evidence="1">Belongs to the RapZ-like family.</text>
</comment>
<accession>B2GAL0</accession>
<protein>
    <recommendedName>
        <fullName evidence="1">Nucleotide-binding protein LAF_0356</fullName>
    </recommendedName>
</protein>
<keyword id="KW-0067">ATP-binding</keyword>
<keyword id="KW-0342">GTP-binding</keyword>
<keyword id="KW-0547">Nucleotide-binding</keyword>
<keyword id="KW-1185">Reference proteome</keyword>
<evidence type="ECO:0000255" key="1">
    <source>
        <dbReference type="HAMAP-Rule" id="MF_00636"/>
    </source>
</evidence>
<dbReference type="EMBL" id="AP008937">
    <property type="protein sequence ID" value="BAG26692.1"/>
    <property type="molecule type" value="Genomic_DNA"/>
</dbReference>
<dbReference type="RefSeq" id="WP_012390872.1">
    <property type="nucleotide sequence ID" value="NC_010610.1"/>
</dbReference>
<dbReference type="SMR" id="B2GAL0"/>
<dbReference type="KEGG" id="lfe:LAF_0356"/>
<dbReference type="PATRIC" id="fig|334390.5.peg.389"/>
<dbReference type="eggNOG" id="COG1660">
    <property type="taxonomic scope" value="Bacteria"/>
</dbReference>
<dbReference type="HOGENOM" id="CLU_059558_0_0_9"/>
<dbReference type="Proteomes" id="UP000001697">
    <property type="component" value="Chromosome"/>
</dbReference>
<dbReference type="GO" id="GO:0005524">
    <property type="term" value="F:ATP binding"/>
    <property type="evidence" value="ECO:0007669"/>
    <property type="project" value="UniProtKB-UniRule"/>
</dbReference>
<dbReference type="GO" id="GO:0005525">
    <property type="term" value="F:GTP binding"/>
    <property type="evidence" value="ECO:0007669"/>
    <property type="project" value="UniProtKB-UniRule"/>
</dbReference>
<dbReference type="Gene3D" id="3.40.50.300">
    <property type="entry name" value="P-loop containing nucleotide triphosphate hydrolases"/>
    <property type="match status" value="1"/>
</dbReference>
<dbReference type="HAMAP" id="MF_00636">
    <property type="entry name" value="RapZ_like"/>
    <property type="match status" value="1"/>
</dbReference>
<dbReference type="InterPro" id="IPR027417">
    <property type="entry name" value="P-loop_NTPase"/>
</dbReference>
<dbReference type="InterPro" id="IPR005337">
    <property type="entry name" value="RapZ-like"/>
</dbReference>
<dbReference type="InterPro" id="IPR053930">
    <property type="entry name" value="RapZ-like_N"/>
</dbReference>
<dbReference type="InterPro" id="IPR053931">
    <property type="entry name" value="RapZ_C"/>
</dbReference>
<dbReference type="NCBIfam" id="NF003828">
    <property type="entry name" value="PRK05416.1"/>
    <property type="match status" value="1"/>
</dbReference>
<dbReference type="PANTHER" id="PTHR30448">
    <property type="entry name" value="RNASE ADAPTER PROTEIN RAPZ"/>
    <property type="match status" value="1"/>
</dbReference>
<dbReference type="PANTHER" id="PTHR30448:SF0">
    <property type="entry name" value="RNASE ADAPTER PROTEIN RAPZ"/>
    <property type="match status" value="1"/>
</dbReference>
<dbReference type="Pfam" id="PF22740">
    <property type="entry name" value="PapZ_C"/>
    <property type="match status" value="1"/>
</dbReference>
<dbReference type="Pfam" id="PF03668">
    <property type="entry name" value="RapZ-like_N"/>
    <property type="match status" value="1"/>
</dbReference>
<dbReference type="PIRSF" id="PIRSF005052">
    <property type="entry name" value="P-loopkin"/>
    <property type="match status" value="1"/>
</dbReference>
<dbReference type="SUPFAM" id="SSF52540">
    <property type="entry name" value="P-loop containing nucleoside triphosphate hydrolases"/>
    <property type="match status" value="1"/>
</dbReference>